<protein>
    <recommendedName>
        <fullName evidence="1">NADPH-dependent 7-cyano-7-deazaguanine reductase</fullName>
        <ecNumber evidence="1">1.7.1.13</ecNumber>
    </recommendedName>
    <alternativeName>
        <fullName evidence="1">7-cyano-7-carbaguanine reductase</fullName>
    </alternativeName>
    <alternativeName>
        <fullName evidence="1">NADPH-dependent nitrile oxidoreductase</fullName>
    </alternativeName>
    <alternativeName>
        <fullName evidence="1">PreQ(0) reductase</fullName>
    </alternativeName>
</protein>
<gene>
    <name evidence="1" type="primary">queF</name>
    <name type="ordered locus">BTH_I0548</name>
</gene>
<reference key="1">
    <citation type="journal article" date="2005" name="BMC Genomics">
        <title>Bacterial genome adaptation to niches: divergence of the potential virulence genes in three Burkholderia species of different survival strategies.</title>
        <authorList>
            <person name="Kim H.S."/>
            <person name="Schell M.A."/>
            <person name="Yu Y."/>
            <person name="Ulrich R.L."/>
            <person name="Sarria S.H."/>
            <person name="Nierman W.C."/>
            <person name="DeShazer D."/>
        </authorList>
    </citation>
    <scope>NUCLEOTIDE SEQUENCE [LARGE SCALE GENOMIC DNA]</scope>
    <source>
        <strain>ATCC 700388 / DSM 13276 / CCUG 48851 / CIP 106301 / E264</strain>
    </source>
</reference>
<organism>
    <name type="scientific">Burkholderia thailandensis (strain ATCC 700388 / DSM 13276 / CCUG 48851 / CIP 106301 / E264)</name>
    <dbReference type="NCBI Taxonomy" id="271848"/>
    <lineage>
        <taxon>Bacteria</taxon>
        <taxon>Pseudomonadati</taxon>
        <taxon>Pseudomonadota</taxon>
        <taxon>Betaproteobacteria</taxon>
        <taxon>Burkholderiales</taxon>
        <taxon>Burkholderiaceae</taxon>
        <taxon>Burkholderia</taxon>
        <taxon>pseudomallei group</taxon>
    </lineage>
</organism>
<sequence>MNPEHSPLGKTTVYANQYDASLLFPIPRAGAREQIGIGAPLPFFGTDIWNAYELSWLNARGKPQVAIATFYVPAESPNIVESKSFKLYLGSFAQTAFESIDAVRDALKRDVSAACGASVTVRLATPAEFRKLQMDELDGLSLDRLDLDADVYETDPSFLTASHDEAPVEETLVTDLLKSNCPVTGQPDWGSVQIHYVGAPIDHAGLLRYIISFRNHTGFHEQCVERIFIDILRACKPVKLAVYARYTRRGGLDINPFRTNYNQPMPDNARTARQ</sequence>
<comment type="function">
    <text evidence="1">Catalyzes the NADPH-dependent reduction of 7-cyano-7-deazaguanine (preQ0) to 7-aminomethyl-7-deazaguanine (preQ1).</text>
</comment>
<comment type="catalytic activity">
    <reaction evidence="1">
        <text>7-aminomethyl-7-carbaguanine + 2 NADP(+) = 7-cyano-7-deazaguanine + 2 NADPH + 3 H(+)</text>
        <dbReference type="Rhea" id="RHEA:13409"/>
        <dbReference type="ChEBI" id="CHEBI:15378"/>
        <dbReference type="ChEBI" id="CHEBI:45075"/>
        <dbReference type="ChEBI" id="CHEBI:57783"/>
        <dbReference type="ChEBI" id="CHEBI:58349"/>
        <dbReference type="ChEBI" id="CHEBI:58703"/>
        <dbReference type="EC" id="1.7.1.13"/>
    </reaction>
</comment>
<comment type="pathway">
    <text evidence="1">tRNA modification; tRNA-queuosine biosynthesis.</text>
</comment>
<comment type="subunit">
    <text evidence="1">Homodimer.</text>
</comment>
<comment type="subcellular location">
    <subcellularLocation>
        <location evidence="1">Cytoplasm</location>
    </subcellularLocation>
</comment>
<comment type="similarity">
    <text evidence="1">Belongs to the GTP cyclohydrolase I family. QueF type 2 subfamily.</text>
</comment>
<keyword id="KW-0963">Cytoplasm</keyword>
<keyword id="KW-0521">NADP</keyword>
<keyword id="KW-0560">Oxidoreductase</keyword>
<keyword id="KW-0671">Queuosine biosynthesis</keyword>
<name>QUEF_BURTA</name>
<evidence type="ECO:0000255" key="1">
    <source>
        <dbReference type="HAMAP-Rule" id="MF_00817"/>
    </source>
</evidence>
<dbReference type="EC" id="1.7.1.13" evidence="1"/>
<dbReference type="EMBL" id="CP000086">
    <property type="protein sequence ID" value="ABC38829.1"/>
    <property type="molecule type" value="Genomic_DNA"/>
</dbReference>
<dbReference type="RefSeq" id="WP_009892951.1">
    <property type="nucleotide sequence ID" value="NZ_CP008785.1"/>
</dbReference>
<dbReference type="SMR" id="Q2T144"/>
<dbReference type="GeneID" id="45120310"/>
<dbReference type="KEGG" id="bte:BTH_I0548"/>
<dbReference type="HOGENOM" id="CLU_054738_0_0_4"/>
<dbReference type="UniPathway" id="UPA00392"/>
<dbReference type="Proteomes" id="UP000001930">
    <property type="component" value="Chromosome I"/>
</dbReference>
<dbReference type="GO" id="GO:0005737">
    <property type="term" value="C:cytoplasm"/>
    <property type="evidence" value="ECO:0007669"/>
    <property type="project" value="UniProtKB-SubCell"/>
</dbReference>
<dbReference type="GO" id="GO:0033739">
    <property type="term" value="F:preQ1 synthase activity"/>
    <property type="evidence" value="ECO:0007669"/>
    <property type="project" value="UniProtKB-UniRule"/>
</dbReference>
<dbReference type="GO" id="GO:0008616">
    <property type="term" value="P:queuosine biosynthetic process"/>
    <property type="evidence" value="ECO:0007669"/>
    <property type="project" value="UniProtKB-UniRule"/>
</dbReference>
<dbReference type="GO" id="GO:0006400">
    <property type="term" value="P:tRNA modification"/>
    <property type="evidence" value="ECO:0007669"/>
    <property type="project" value="UniProtKB-UniRule"/>
</dbReference>
<dbReference type="Gene3D" id="3.30.1130.10">
    <property type="match status" value="2"/>
</dbReference>
<dbReference type="HAMAP" id="MF_00817">
    <property type="entry name" value="QueF_type2"/>
    <property type="match status" value="1"/>
</dbReference>
<dbReference type="InterPro" id="IPR043133">
    <property type="entry name" value="GTP-CH-I_C/QueF"/>
</dbReference>
<dbReference type="InterPro" id="IPR050084">
    <property type="entry name" value="NADPH_dep_7-cyano-7-deazaG_red"/>
</dbReference>
<dbReference type="InterPro" id="IPR029500">
    <property type="entry name" value="QueF"/>
</dbReference>
<dbReference type="InterPro" id="IPR029139">
    <property type="entry name" value="QueF_N"/>
</dbReference>
<dbReference type="InterPro" id="IPR016428">
    <property type="entry name" value="QueF_type2"/>
</dbReference>
<dbReference type="NCBIfam" id="TIGR03138">
    <property type="entry name" value="QueF"/>
    <property type="match status" value="1"/>
</dbReference>
<dbReference type="PANTHER" id="PTHR34354">
    <property type="entry name" value="NADPH-DEPENDENT 7-CYANO-7-DEAZAGUANINE REDUCTASE"/>
    <property type="match status" value="1"/>
</dbReference>
<dbReference type="PANTHER" id="PTHR34354:SF1">
    <property type="entry name" value="NADPH-DEPENDENT 7-CYANO-7-DEAZAGUANINE REDUCTASE"/>
    <property type="match status" value="1"/>
</dbReference>
<dbReference type="Pfam" id="PF14489">
    <property type="entry name" value="QueF"/>
    <property type="match status" value="1"/>
</dbReference>
<dbReference type="Pfam" id="PF14819">
    <property type="entry name" value="QueF_N"/>
    <property type="match status" value="1"/>
</dbReference>
<dbReference type="PIRSF" id="PIRSF004750">
    <property type="entry name" value="Nitrile_oxidored_YqcD_prd"/>
    <property type="match status" value="1"/>
</dbReference>
<dbReference type="SUPFAM" id="SSF55620">
    <property type="entry name" value="Tetrahydrobiopterin biosynthesis enzymes-like"/>
    <property type="match status" value="1"/>
</dbReference>
<accession>Q2T144</accession>
<feature type="chain" id="PRO_0000247706" description="NADPH-dependent 7-cyano-7-deazaguanine reductase">
    <location>
        <begin position="1"/>
        <end position="274"/>
    </location>
</feature>
<feature type="active site" description="Thioimide intermediate" evidence="1">
    <location>
        <position position="181"/>
    </location>
</feature>
<feature type="active site" description="Proton donor" evidence="1">
    <location>
        <position position="188"/>
    </location>
</feature>
<feature type="binding site" evidence="1">
    <location>
        <begin position="80"/>
        <end position="82"/>
    </location>
    <ligand>
        <name>substrate</name>
    </ligand>
</feature>
<feature type="binding site" evidence="1">
    <location>
        <begin position="82"/>
        <end position="83"/>
    </location>
    <ligand>
        <name>NADPH</name>
        <dbReference type="ChEBI" id="CHEBI:57783"/>
    </ligand>
</feature>
<feature type="binding site" evidence="1">
    <location>
        <begin position="220"/>
        <end position="221"/>
    </location>
    <ligand>
        <name>substrate</name>
    </ligand>
</feature>
<feature type="binding site" evidence="1">
    <location>
        <begin position="249"/>
        <end position="250"/>
    </location>
    <ligand>
        <name>NADPH</name>
        <dbReference type="ChEBI" id="CHEBI:57783"/>
    </ligand>
</feature>
<proteinExistence type="inferred from homology"/>